<dbReference type="EC" id="3.5.2.9" evidence="1"/>
<dbReference type="EMBL" id="AE006468">
    <property type="protein sequence ID" value="AAL19658.1"/>
    <property type="molecule type" value="Genomic_DNA"/>
</dbReference>
<dbReference type="RefSeq" id="NP_459699.1">
    <property type="nucleotide sequence ID" value="NC_003197.2"/>
</dbReference>
<dbReference type="RefSeq" id="WP_001017909.1">
    <property type="nucleotide sequence ID" value="NC_003197.2"/>
</dbReference>
<dbReference type="SMR" id="Q8ZQV6"/>
<dbReference type="STRING" id="99287.STM0714"/>
<dbReference type="PaxDb" id="99287-STM0714"/>
<dbReference type="GeneID" id="1252234"/>
<dbReference type="KEGG" id="stm:STM0714"/>
<dbReference type="PATRIC" id="fig|99287.12.peg.746"/>
<dbReference type="HOGENOM" id="CLU_069535_0_0_6"/>
<dbReference type="OMA" id="VCIHGDT"/>
<dbReference type="PhylomeDB" id="Q8ZQV6"/>
<dbReference type="BioCyc" id="SENT99287:STM0714-MONOMER"/>
<dbReference type="Proteomes" id="UP000001014">
    <property type="component" value="Chromosome"/>
</dbReference>
<dbReference type="GO" id="GO:0017168">
    <property type="term" value="F:5-oxoprolinase (ATP-hydrolyzing) activity"/>
    <property type="evidence" value="ECO:0007669"/>
    <property type="project" value="UniProtKB-UniRule"/>
</dbReference>
<dbReference type="GO" id="GO:0005524">
    <property type="term" value="F:ATP binding"/>
    <property type="evidence" value="ECO:0007669"/>
    <property type="project" value="UniProtKB-UniRule"/>
</dbReference>
<dbReference type="GO" id="GO:0005975">
    <property type="term" value="P:carbohydrate metabolic process"/>
    <property type="evidence" value="ECO:0007669"/>
    <property type="project" value="InterPro"/>
</dbReference>
<dbReference type="CDD" id="cd10800">
    <property type="entry name" value="LamB_YcsF_YbgL_like"/>
    <property type="match status" value="1"/>
</dbReference>
<dbReference type="Gene3D" id="3.20.20.370">
    <property type="entry name" value="Glycoside hydrolase/deacetylase"/>
    <property type="match status" value="1"/>
</dbReference>
<dbReference type="HAMAP" id="MF_00691">
    <property type="entry name" value="PxpA"/>
    <property type="match status" value="1"/>
</dbReference>
<dbReference type="InterPro" id="IPR011330">
    <property type="entry name" value="Glyco_hydro/deAcase_b/a-brl"/>
</dbReference>
<dbReference type="InterPro" id="IPR005501">
    <property type="entry name" value="LamB/YcsF/PxpA-like"/>
</dbReference>
<dbReference type="NCBIfam" id="NF003812">
    <property type="entry name" value="PRK05406.1-1"/>
    <property type="match status" value="1"/>
</dbReference>
<dbReference type="NCBIfam" id="NF003814">
    <property type="entry name" value="PRK05406.1-3"/>
    <property type="match status" value="1"/>
</dbReference>
<dbReference type="NCBIfam" id="NF003815">
    <property type="entry name" value="PRK05406.1-4"/>
    <property type="match status" value="1"/>
</dbReference>
<dbReference type="NCBIfam" id="NF003816">
    <property type="entry name" value="PRK05406.1-5"/>
    <property type="match status" value="1"/>
</dbReference>
<dbReference type="PANTHER" id="PTHR30292:SF0">
    <property type="entry name" value="5-OXOPROLINASE SUBUNIT A"/>
    <property type="match status" value="1"/>
</dbReference>
<dbReference type="PANTHER" id="PTHR30292">
    <property type="entry name" value="UNCHARACTERIZED PROTEIN YBGL-RELATED"/>
    <property type="match status" value="1"/>
</dbReference>
<dbReference type="Pfam" id="PF03746">
    <property type="entry name" value="LamB_YcsF"/>
    <property type="match status" value="1"/>
</dbReference>
<dbReference type="SUPFAM" id="SSF88713">
    <property type="entry name" value="Glycoside hydrolase/deacetylase"/>
    <property type="match status" value="1"/>
</dbReference>
<evidence type="ECO:0000255" key="1">
    <source>
        <dbReference type="HAMAP-Rule" id="MF_00691"/>
    </source>
</evidence>
<comment type="function">
    <text evidence="1">Catalyzes the cleavage of 5-oxoproline to form L-glutamate coupled to the hydrolysis of ATP to ADP and inorganic phosphate.</text>
</comment>
<comment type="catalytic activity">
    <reaction evidence="1">
        <text>5-oxo-L-proline + ATP + 2 H2O = L-glutamate + ADP + phosphate + H(+)</text>
        <dbReference type="Rhea" id="RHEA:10348"/>
        <dbReference type="ChEBI" id="CHEBI:15377"/>
        <dbReference type="ChEBI" id="CHEBI:15378"/>
        <dbReference type="ChEBI" id="CHEBI:29985"/>
        <dbReference type="ChEBI" id="CHEBI:30616"/>
        <dbReference type="ChEBI" id="CHEBI:43474"/>
        <dbReference type="ChEBI" id="CHEBI:58402"/>
        <dbReference type="ChEBI" id="CHEBI:456216"/>
        <dbReference type="EC" id="3.5.2.9"/>
    </reaction>
</comment>
<comment type="subunit">
    <text evidence="1">Forms a complex composed of PxpA, PxpB and PxpC.</text>
</comment>
<comment type="similarity">
    <text evidence="1">Belongs to the LamB/PxpA family.</text>
</comment>
<organism>
    <name type="scientific">Salmonella typhimurium (strain LT2 / SGSC1412 / ATCC 700720)</name>
    <dbReference type="NCBI Taxonomy" id="99287"/>
    <lineage>
        <taxon>Bacteria</taxon>
        <taxon>Pseudomonadati</taxon>
        <taxon>Pseudomonadota</taxon>
        <taxon>Gammaproteobacteria</taxon>
        <taxon>Enterobacterales</taxon>
        <taxon>Enterobacteriaceae</taxon>
        <taxon>Salmonella</taxon>
    </lineage>
</organism>
<protein>
    <recommendedName>
        <fullName evidence="1">5-oxoprolinase subunit A</fullName>
        <shortName evidence="1">5-OPase subunit A</shortName>
        <ecNumber evidence="1">3.5.2.9</ecNumber>
    </recommendedName>
    <alternativeName>
        <fullName evidence="1">5-oxoprolinase (ATP-hydrolyzing) subunit A</fullName>
    </alternativeName>
</protein>
<accession>Q8ZQV6</accession>
<reference key="1">
    <citation type="journal article" date="2001" name="Nature">
        <title>Complete genome sequence of Salmonella enterica serovar Typhimurium LT2.</title>
        <authorList>
            <person name="McClelland M."/>
            <person name="Sanderson K.E."/>
            <person name="Spieth J."/>
            <person name="Clifton S.W."/>
            <person name="Latreille P."/>
            <person name="Courtney L."/>
            <person name="Porwollik S."/>
            <person name="Ali J."/>
            <person name="Dante M."/>
            <person name="Du F."/>
            <person name="Hou S."/>
            <person name="Layman D."/>
            <person name="Leonard S."/>
            <person name="Nguyen C."/>
            <person name="Scott K."/>
            <person name="Holmes A."/>
            <person name="Grewal N."/>
            <person name="Mulvaney E."/>
            <person name="Ryan E."/>
            <person name="Sun H."/>
            <person name="Florea L."/>
            <person name="Miller W."/>
            <person name="Stoneking T."/>
            <person name="Nhan M."/>
            <person name="Waterston R."/>
            <person name="Wilson R.K."/>
        </authorList>
    </citation>
    <scope>NUCLEOTIDE SEQUENCE [LARGE SCALE GENOMIC DNA]</scope>
    <source>
        <strain>LT2 / SGSC1412 / ATCC 700720</strain>
    </source>
</reference>
<feature type="chain" id="PRO_0000185040" description="5-oxoprolinase subunit A">
    <location>
        <begin position="1"/>
        <end position="244"/>
    </location>
</feature>
<sequence>MNIDLNADLGEGCASDSELLTLVSSANIACGFHAGDAQTMLTCVREALKNGVAIGAHPSFPDRDNFGRTAMVLPPETVYAQTLYQIGALGAIVQAQGGVMRHVKPHGMLYNQAAKDPHLAQAIAKAVHDYDPSLILVGLAGSELIRAGERHRLVTRQEVFADRGYQADGSLVPRMQPGALIHDEEQALAQTLDMVQAGRVKSVTGVWTTVTAQTVCIHGDGEYALAFARRLRAAFNARNIHVIA</sequence>
<name>PXPA_SALTY</name>
<keyword id="KW-0067">ATP-binding</keyword>
<keyword id="KW-0378">Hydrolase</keyword>
<keyword id="KW-0547">Nucleotide-binding</keyword>
<keyword id="KW-1185">Reference proteome</keyword>
<gene>
    <name evidence="1" type="primary">pxpA</name>
    <name type="synonym">ybgL</name>
    <name type="ordered locus">STM0714</name>
</gene>
<proteinExistence type="inferred from homology"/>